<protein>
    <recommendedName>
        <fullName evidence="1">Small ribosomal subunit protein uS2</fullName>
    </recommendedName>
    <alternativeName>
        <fullName evidence="2">30S ribosomal protein S2</fullName>
    </alternativeName>
</protein>
<comment type="similarity">
    <text evidence="1">Belongs to the universal ribosomal protein uS2 family.</text>
</comment>
<keyword id="KW-0687">Ribonucleoprotein</keyword>
<keyword id="KW-0689">Ribosomal protein</keyword>
<organism>
    <name type="scientific">Anoxybacillus flavithermus (strain DSM 21510 / WK1)</name>
    <dbReference type="NCBI Taxonomy" id="491915"/>
    <lineage>
        <taxon>Bacteria</taxon>
        <taxon>Bacillati</taxon>
        <taxon>Bacillota</taxon>
        <taxon>Bacilli</taxon>
        <taxon>Bacillales</taxon>
        <taxon>Anoxybacillaceae</taxon>
        <taxon>Anoxybacillus</taxon>
    </lineage>
</organism>
<evidence type="ECO:0000255" key="1">
    <source>
        <dbReference type="HAMAP-Rule" id="MF_00291"/>
    </source>
</evidence>
<evidence type="ECO:0000305" key="2"/>
<dbReference type="EMBL" id="CP000922">
    <property type="protein sequence ID" value="ACJ34070.1"/>
    <property type="molecule type" value="Genomic_DNA"/>
</dbReference>
<dbReference type="RefSeq" id="WP_006322350.1">
    <property type="nucleotide sequence ID" value="NC_011567.1"/>
</dbReference>
<dbReference type="SMR" id="B7GG89"/>
<dbReference type="STRING" id="491915.Aflv_1709"/>
<dbReference type="GeneID" id="7037962"/>
<dbReference type="KEGG" id="afl:Aflv_1709"/>
<dbReference type="eggNOG" id="COG0052">
    <property type="taxonomic scope" value="Bacteria"/>
</dbReference>
<dbReference type="HOGENOM" id="CLU_040318_1_2_9"/>
<dbReference type="Proteomes" id="UP000000742">
    <property type="component" value="Chromosome"/>
</dbReference>
<dbReference type="GO" id="GO:0022627">
    <property type="term" value="C:cytosolic small ribosomal subunit"/>
    <property type="evidence" value="ECO:0007669"/>
    <property type="project" value="TreeGrafter"/>
</dbReference>
<dbReference type="GO" id="GO:0003735">
    <property type="term" value="F:structural constituent of ribosome"/>
    <property type="evidence" value="ECO:0007669"/>
    <property type="project" value="InterPro"/>
</dbReference>
<dbReference type="GO" id="GO:0006412">
    <property type="term" value="P:translation"/>
    <property type="evidence" value="ECO:0007669"/>
    <property type="project" value="UniProtKB-UniRule"/>
</dbReference>
<dbReference type="CDD" id="cd01425">
    <property type="entry name" value="RPS2"/>
    <property type="match status" value="1"/>
</dbReference>
<dbReference type="FunFam" id="1.10.287.610:FF:000001">
    <property type="entry name" value="30S ribosomal protein S2"/>
    <property type="match status" value="1"/>
</dbReference>
<dbReference type="Gene3D" id="3.40.50.10490">
    <property type="entry name" value="Glucose-6-phosphate isomerase like protein, domain 1"/>
    <property type="match status" value="1"/>
</dbReference>
<dbReference type="Gene3D" id="1.10.287.610">
    <property type="entry name" value="Helix hairpin bin"/>
    <property type="match status" value="1"/>
</dbReference>
<dbReference type="HAMAP" id="MF_00291_B">
    <property type="entry name" value="Ribosomal_uS2_B"/>
    <property type="match status" value="1"/>
</dbReference>
<dbReference type="InterPro" id="IPR001865">
    <property type="entry name" value="Ribosomal_uS2"/>
</dbReference>
<dbReference type="InterPro" id="IPR005706">
    <property type="entry name" value="Ribosomal_uS2_bac/mit/plastid"/>
</dbReference>
<dbReference type="InterPro" id="IPR018130">
    <property type="entry name" value="Ribosomal_uS2_CS"/>
</dbReference>
<dbReference type="InterPro" id="IPR023591">
    <property type="entry name" value="Ribosomal_uS2_flav_dom_sf"/>
</dbReference>
<dbReference type="NCBIfam" id="TIGR01011">
    <property type="entry name" value="rpsB_bact"/>
    <property type="match status" value="1"/>
</dbReference>
<dbReference type="PANTHER" id="PTHR12534">
    <property type="entry name" value="30S RIBOSOMAL PROTEIN S2 PROKARYOTIC AND ORGANELLAR"/>
    <property type="match status" value="1"/>
</dbReference>
<dbReference type="PANTHER" id="PTHR12534:SF0">
    <property type="entry name" value="SMALL RIBOSOMAL SUBUNIT PROTEIN US2M"/>
    <property type="match status" value="1"/>
</dbReference>
<dbReference type="Pfam" id="PF00318">
    <property type="entry name" value="Ribosomal_S2"/>
    <property type="match status" value="1"/>
</dbReference>
<dbReference type="PRINTS" id="PR00395">
    <property type="entry name" value="RIBOSOMALS2"/>
</dbReference>
<dbReference type="SUPFAM" id="SSF52313">
    <property type="entry name" value="Ribosomal protein S2"/>
    <property type="match status" value="1"/>
</dbReference>
<dbReference type="PROSITE" id="PS00962">
    <property type="entry name" value="RIBOSOMAL_S2_1"/>
    <property type="match status" value="1"/>
</dbReference>
<dbReference type="PROSITE" id="PS00963">
    <property type="entry name" value="RIBOSOMAL_S2_2"/>
    <property type="match status" value="1"/>
</dbReference>
<sequence length="235" mass="26721">MSVISMKQLLEAGVHFGHQTRRWNPKMKKYIFTERNGIYIIDLQKTVKKVEEAYNFVKELAADGGKILFVGTKKQAQDSVKEEAERSGMFYVNQRWLGGTLTNFATIQKRIKRLKEIERMAEDGTFDVLPKKEVVKLKKELERLEKFLGGIKEMKELPDALFVIDPRKERIAVAEARKLNIPIIGIVDTNCDPDEIDYVIPANDDAIRAVKLLTSKIADAILEAKQGEEAVVTAE</sequence>
<accession>B7GG89</accession>
<gene>
    <name evidence="1" type="primary">rpsB</name>
    <name type="ordered locus">Aflv_1709</name>
</gene>
<reference key="1">
    <citation type="journal article" date="2008" name="Genome Biol.">
        <title>Encapsulated in silica: genome, proteome and physiology of the thermophilic bacterium Anoxybacillus flavithermus WK1.</title>
        <authorList>
            <person name="Saw J.H."/>
            <person name="Mountain B.W."/>
            <person name="Feng L."/>
            <person name="Omelchenko M.V."/>
            <person name="Hou S."/>
            <person name="Saito J.A."/>
            <person name="Stott M.B."/>
            <person name="Li D."/>
            <person name="Zhao G."/>
            <person name="Wu J."/>
            <person name="Galperin M.Y."/>
            <person name="Koonin E.V."/>
            <person name="Makarova K.S."/>
            <person name="Wolf Y.I."/>
            <person name="Rigden D.J."/>
            <person name="Dunfield P.F."/>
            <person name="Wang L."/>
            <person name="Alam M."/>
        </authorList>
    </citation>
    <scope>NUCLEOTIDE SEQUENCE [LARGE SCALE GENOMIC DNA]</scope>
    <source>
        <strain>DSM 21510 / WK1</strain>
    </source>
</reference>
<proteinExistence type="inferred from homology"/>
<feature type="chain" id="PRO_1000119414" description="Small ribosomal subunit protein uS2">
    <location>
        <begin position="1"/>
        <end position="235"/>
    </location>
</feature>
<name>RS2_ANOFW</name>